<organism>
    <name type="scientific">Mycobacterium ulcerans (strain Agy99)</name>
    <dbReference type="NCBI Taxonomy" id="362242"/>
    <lineage>
        <taxon>Bacteria</taxon>
        <taxon>Bacillati</taxon>
        <taxon>Actinomycetota</taxon>
        <taxon>Actinomycetes</taxon>
        <taxon>Mycobacteriales</taxon>
        <taxon>Mycobacteriaceae</taxon>
        <taxon>Mycobacterium</taxon>
        <taxon>Mycobacterium ulcerans group</taxon>
    </lineage>
</organism>
<feature type="chain" id="PRO_1000052264" description="Large ribosomal subunit protein uL24">
    <location>
        <begin position="1"/>
        <end position="107"/>
    </location>
</feature>
<comment type="function">
    <text evidence="1">One of two assembly initiator proteins, it binds directly to the 5'-end of the 23S rRNA, where it nucleates assembly of the 50S subunit.</text>
</comment>
<comment type="function">
    <text evidence="1">One of the proteins that surrounds the polypeptide exit tunnel on the outside of the subunit.</text>
</comment>
<comment type="subunit">
    <text evidence="1">Part of the 50S ribosomal subunit.</text>
</comment>
<comment type="similarity">
    <text evidence="1">Belongs to the universal ribosomal protein uL24 family.</text>
</comment>
<evidence type="ECO:0000255" key="1">
    <source>
        <dbReference type="HAMAP-Rule" id="MF_01326"/>
    </source>
</evidence>
<evidence type="ECO:0000305" key="2"/>
<dbReference type="EMBL" id="CP000325">
    <property type="protein sequence ID" value="ABL03445.1"/>
    <property type="molecule type" value="Genomic_DNA"/>
</dbReference>
<dbReference type="RefSeq" id="WP_011739070.1">
    <property type="nucleotide sequence ID" value="NC_008611.1"/>
</dbReference>
<dbReference type="SMR" id="A0PM76"/>
<dbReference type="GeneID" id="93438586"/>
<dbReference type="KEGG" id="mul:MUL_0805"/>
<dbReference type="eggNOG" id="COG0198">
    <property type="taxonomic scope" value="Bacteria"/>
</dbReference>
<dbReference type="HOGENOM" id="CLU_093315_2_0_11"/>
<dbReference type="Proteomes" id="UP000000765">
    <property type="component" value="Chromosome"/>
</dbReference>
<dbReference type="GO" id="GO:1990904">
    <property type="term" value="C:ribonucleoprotein complex"/>
    <property type="evidence" value="ECO:0007669"/>
    <property type="project" value="UniProtKB-KW"/>
</dbReference>
<dbReference type="GO" id="GO:0005840">
    <property type="term" value="C:ribosome"/>
    <property type="evidence" value="ECO:0007669"/>
    <property type="project" value="UniProtKB-KW"/>
</dbReference>
<dbReference type="GO" id="GO:0019843">
    <property type="term" value="F:rRNA binding"/>
    <property type="evidence" value="ECO:0007669"/>
    <property type="project" value="UniProtKB-UniRule"/>
</dbReference>
<dbReference type="GO" id="GO:0003735">
    <property type="term" value="F:structural constituent of ribosome"/>
    <property type="evidence" value="ECO:0007669"/>
    <property type="project" value="InterPro"/>
</dbReference>
<dbReference type="GO" id="GO:0006412">
    <property type="term" value="P:translation"/>
    <property type="evidence" value="ECO:0007669"/>
    <property type="project" value="UniProtKB-UniRule"/>
</dbReference>
<dbReference type="CDD" id="cd06089">
    <property type="entry name" value="KOW_RPL26"/>
    <property type="match status" value="1"/>
</dbReference>
<dbReference type="FunFam" id="2.30.30.30:FF:000004">
    <property type="entry name" value="50S ribosomal protein L24"/>
    <property type="match status" value="1"/>
</dbReference>
<dbReference type="Gene3D" id="2.30.30.30">
    <property type="match status" value="1"/>
</dbReference>
<dbReference type="HAMAP" id="MF_01326_B">
    <property type="entry name" value="Ribosomal_uL24_B"/>
    <property type="match status" value="1"/>
</dbReference>
<dbReference type="InterPro" id="IPR005824">
    <property type="entry name" value="KOW"/>
</dbReference>
<dbReference type="InterPro" id="IPR014722">
    <property type="entry name" value="Rib_uL2_dom2"/>
</dbReference>
<dbReference type="InterPro" id="IPR003256">
    <property type="entry name" value="Ribosomal_uL24"/>
</dbReference>
<dbReference type="InterPro" id="IPR005825">
    <property type="entry name" value="Ribosomal_uL24_CS"/>
</dbReference>
<dbReference type="InterPro" id="IPR041988">
    <property type="entry name" value="Ribosomal_uL24_KOW"/>
</dbReference>
<dbReference type="InterPro" id="IPR008991">
    <property type="entry name" value="Translation_prot_SH3-like_sf"/>
</dbReference>
<dbReference type="NCBIfam" id="TIGR01079">
    <property type="entry name" value="rplX_bact"/>
    <property type="match status" value="1"/>
</dbReference>
<dbReference type="PANTHER" id="PTHR12903">
    <property type="entry name" value="MITOCHONDRIAL RIBOSOMAL PROTEIN L24"/>
    <property type="match status" value="1"/>
</dbReference>
<dbReference type="Pfam" id="PF00467">
    <property type="entry name" value="KOW"/>
    <property type="match status" value="1"/>
</dbReference>
<dbReference type="Pfam" id="PF17136">
    <property type="entry name" value="ribosomal_L24"/>
    <property type="match status" value="1"/>
</dbReference>
<dbReference type="SMART" id="SM00739">
    <property type="entry name" value="KOW"/>
    <property type="match status" value="1"/>
</dbReference>
<dbReference type="SUPFAM" id="SSF50104">
    <property type="entry name" value="Translation proteins SH3-like domain"/>
    <property type="match status" value="1"/>
</dbReference>
<dbReference type="PROSITE" id="PS01108">
    <property type="entry name" value="RIBOSOMAL_L24"/>
    <property type="match status" value="1"/>
</dbReference>
<keyword id="KW-0687">Ribonucleoprotein</keyword>
<keyword id="KW-0689">Ribosomal protein</keyword>
<keyword id="KW-0694">RNA-binding</keyword>
<keyword id="KW-0699">rRNA-binding</keyword>
<gene>
    <name evidence="1" type="primary">rplX</name>
    <name type="ordered locus">MUL_0805</name>
</gene>
<sequence length="107" mass="11659">MKVHKGDTVLVVSGKDKGAKGKVLQAYPERNRVLVEGVNRIKKHTAISTNQRGAKSGGIVTQEAPIHVSNVMVVDSDGKPTRIGYRVDEETGKRVRISKRNGKDIQA</sequence>
<name>RL24_MYCUA</name>
<reference key="1">
    <citation type="journal article" date="2007" name="Genome Res.">
        <title>Reductive evolution and niche adaptation inferred from the genome of Mycobacterium ulcerans, the causative agent of Buruli ulcer.</title>
        <authorList>
            <person name="Stinear T.P."/>
            <person name="Seemann T."/>
            <person name="Pidot S."/>
            <person name="Frigui W."/>
            <person name="Reysset G."/>
            <person name="Garnier T."/>
            <person name="Meurice G."/>
            <person name="Simon D."/>
            <person name="Bouchier C."/>
            <person name="Ma L."/>
            <person name="Tichit M."/>
            <person name="Porter J.L."/>
            <person name="Ryan J."/>
            <person name="Johnson P.D.R."/>
            <person name="Davies J.K."/>
            <person name="Jenkin G.A."/>
            <person name="Small P.L.C."/>
            <person name="Jones L.M."/>
            <person name="Tekaia F."/>
            <person name="Laval F."/>
            <person name="Daffe M."/>
            <person name="Parkhill J."/>
            <person name="Cole S.T."/>
        </authorList>
    </citation>
    <scope>NUCLEOTIDE SEQUENCE [LARGE SCALE GENOMIC DNA]</scope>
    <source>
        <strain>Agy99</strain>
    </source>
</reference>
<protein>
    <recommendedName>
        <fullName evidence="1">Large ribosomal subunit protein uL24</fullName>
    </recommendedName>
    <alternativeName>
        <fullName evidence="2">50S ribosomal protein L24</fullName>
    </alternativeName>
</protein>
<proteinExistence type="inferred from homology"/>
<accession>A0PM76</accession>